<protein>
    <recommendedName>
        <fullName evidence="1">Protein RecA</fullName>
    </recommendedName>
    <alternativeName>
        <fullName evidence="1">Recombinase A</fullName>
    </alternativeName>
</protein>
<gene>
    <name evidence="1" type="primary">recA</name>
    <name type="ordered locus">XC_2509</name>
</gene>
<name>RECA_XANC8</name>
<feature type="chain" id="PRO_0000122904" description="Protein RecA">
    <location>
        <begin position="1"/>
        <end position="343"/>
    </location>
</feature>
<feature type="binding site" evidence="1">
    <location>
        <begin position="65"/>
        <end position="72"/>
    </location>
    <ligand>
        <name>ATP</name>
        <dbReference type="ChEBI" id="CHEBI:30616"/>
    </ligand>
</feature>
<sequence>MDENKKRALSAALSQIEKQFGKGSVMRMGDRVIEAVEVIPTGSLMLDIALGIGGLPKGRVVEIYGPESSGKTTLTLQAIAECQKLGGTAAFIDAEHALDPIYAAKLGVNVDDLLLSQPDTGEQALEIADMLVRSSSVDIVVIDSVAALTPKAEIEGEMGDQLPGLQARLMSQALRKLTGNIKRSNTLVVFINQLRMKIGVMMPGQSPEVTTGGNALKFYASVRLDIRRIGAIKKGDEIIGNQTKIKVVKNKLAPPFKQVITEILYGEGISREGELIDMGVEAKLVDKAGAWYSYGDERIGQGKDNARGYLRDNPQVAIKLEAELREKFQPAEAPREAGETESE</sequence>
<keyword id="KW-0067">ATP-binding</keyword>
<keyword id="KW-0963">Cytoplasm</keyword>
<keyword id="KW-0227">DNA damage</keyword>
<keyword id="KW-0233">DNA recombination</keyword>
<keyword id="KW-0234">DNA repair</keyword>
<keyword id="KW-0238">DNA-binding</keyword>
<keyword id="KW-0547">Nucleotide-binding</keyword>
<keyword id="KW-0742">SOS response</keyword>
<comment type="function">
    <text evidence="1">Can catalyze the hydrolysis of ATP in the presence of single-stranded DNA, the ATP-dependent uptake of single-stranded DNA by duplex DNA, and the ATP-dependent hybridization of homologous single-stranded DNAs. It interacts with LexA causing its activation and leading to its autocatalytic cleavage.</text>
</comment>
<comment type="subcellular location">
    <subcellularLocation>
        <location evidence="1">Cytoplasm</location>
    </subcellularLocation>
</comment>
<comment type="similarity">
    <text evidence="1">Belongs to the RecA family.</text>
</comment>
<proteinExistence type="inferred from homology"/>
<reference key="1">
    <citation type="journal article" date="2005" name="Genome Res.">
        <title>Comparative and functional genomic analyses of the pathogenicity of phytopathogen Xanthomonas campestris pv. campestris.</title>
        <authorList>
            <person name="Qian W."/>
            <person name="Jia Y."/>
            <person name="Ren S.-X."/>
            <person name="He Y.-Q."/>
            <person name="Feng J.-X."/>
            <person name="Lu L.-F."/>
            <person name="Sun Q."/>
            <person name="Ying G."/>
            <person name="Tang D.-J."/>
            <person name="Tang H."/>
            <person name="Wu W."/>
            <person name="Hao P."/>
            <person name="Wang L."/>
            <person name="Jiang B.-L."/>
            <person name="Zeng S."/>
            <person name="Gu W.-Y."/>
            <person name="Lu G."/>
            <person name="Rong L."/>
            <person name="Tian Y."/>
            <person name="Yao Z."/>
            <person name="Fu G."/>
            <person name="Chen B."/>
            <person name="Fang R."/>
            <person name="Qiang B."/>
            <person name="Chen Z."/>
            <person name="Zhao G.-P."/>
            <person name="Tang J.-L."/>
            <person name="He C."/>
        </authorList>
    </citation>
    <scope>NUCLEOTIDE SEQUENCE [LARGE SCALE GENOMIC DNA]</scope>
    <source>
        <strain>8004</strain>
    </source>
</reference>
<dbReference type="EMBL" id="CP000050">
    <property type="protein sequence ID" value="AAY49559.1"/>
    <property type="molecule type" value="Genomic_DNA"/>
</dbReference>
<dbReference type="RefSeq" id="WP_011036899.1">
    <property type="nucleotide sequence ID" value="NZ_CP155948.1"/>
</dbReference>
<dbReference type="SMR" id="Q4UTR4"/>
<dbReference type="GeneID" id="58013723"/>
<dbReference type="KEGG" id="xcb:XC_2509"/>
<dbReference type="HOGENOM" id="CLU_040469_1_2_6"/>
<dbReference type="Proteomes" id="UP000000420">
    <property type="component" value="Chromosome"/>
</dbReference>
<dbReference type="GO" id="GO:0005829">
    <property type="term" value="C:cytosol"/>
    <property type="evidence" value="ECO:0007669"/>
    <property type="project" value="TreeGrafter"/>
</dbReference>
<dbReference type="GO" id="GO:0005524">
    <property type="term" value="F:ATP binding"/>
    <property type="evidence" value="ECO:0007669"/>
    <property type="project" value="UniProtKB-UniRule"/>
</dbReference>
<dbReference type="GO" id="GO:0016887">
    <property type="term" value="F:ATP hydrolysis activity"/>
    <property type="evidence" value="ECO:0007669"/>
    <property type="project" value="InterPro"/>
</dbReference>
<dbReference type="GO" id="GO:0140664">
    <property type="term" value="F:ATP-dependent DNA damage sensor activity"/>
    <property type="evidence" value="ECO:0007669"/>
    <property type="project" value="InterPro"/>
</dbReference>
<dbReference type="GO" id="GO:0003684">
    <property type="term" value="F:damaged DNA binding"/>
    <property type="evidence" value="ECO:0007669"/>
    <property type="project" value="UniProtKB-UniRule"/>
</dbReference>
<dbReference type="GO" id="GO:0003697">
    <property type="term" value="F:single-stranded DNA binding"/>
    <property type="evidence" value="ECO:0007669"/>
    <property type="project" value="UniProtKB-UniRule"/>
</dbReference>
<dbReference type="GO" id="GO:0006310">
    <property type="term" value="P:DNA recombination"/>
    <property type="evidence" value="ECO:0007669"/>
    <property type="project" value="UniProtKB-UniRule"/>
</dbReference>
<dbReference type="GO" id="GO:0006281">
    <property type="term" value="P:DNA repair"/>
    <property type="evidence" value="ECO:0007669"/>
    <property type="project" value="UniProtKB-UniRule"/>
</dbReference>
<dbReference type="GO" id="GO:0009432">
    <property type="term" value="P:SOS response"/>
    <property type="evidence" value="ECO:0007669"/>
    <property type="project" value="UniProtKB-UniRule"/>
</dbReference>
<dbReference type="CDD" id="cd00983">
    <property type="entry name" value="RecA"/>
    <property type="match status" value="1"/>
</dbReference>
<dbReference type="FunFam" id="3.40.50.300:FF:000087">
    <property type="entry name" value="Recombinase RecA"/>
    <property type="match status" value="1"/>
</dbReference>
<dbReference type="Gene3D" id="3.40.50.300">
    <property type="entry name" value="P-loop containing nucleotide triphosphate hydrolases"/>
    <property type="match status" value="1"/>
</dbReference>
<dbReference type="HAMAP" id="MF_00268">
    <property type="entry name" value="RecA"/>
    <property type="match status" value="1"/>
</dbReference>
<dbReference type="InterPro" id="IPR003593">
    <property type="entry name" value="AAA+_ATPase"/>
</dbReference>
<dbReference type="InterPro" id="IPR013765">
    <property type="entry name" value="DNA_recomb/repair_RecA"/>
</dbReference>
<dbReference type="InterPro" id="IPR020584">
    <property type="entry name" value="DNA_recomb/repair_RecA_CS"/>
</dbReference>
<dbReference type="InterPro" id="IPR027417">
    <property type="entry name" value="P-loop_NTPase"/>
</dbReference>
<dbReference type="InterPro" id="IPR049261">
    <property type="entry name" value="RecA-like_C"/>
</dbReference>
<dbReference type="InterPro" id="IPR049428">
    <property type="entry name" value="RecA-like_N"/>
</dbReference>
<dbReference type="InterPro" id="IPR020588">
    <property type="entry name" value="RecA_ATP-bd"/>
</dbReference>
<dbReference type="InterPro" id="IPR023400">
    <property type="entry name" value="RecA_C_sf"/>
</dbReference>
<dbReference type="InterPro" id="IPR020587">
    <property type="entry name" value="RecA_monomer-monomer_interface"/>
</dbReference>
<dbReference type="NCBIfam" id="TIGR02012">
    <property type="entry name" value="tigrfam_recA"/>
    <property type="match status" value="1"/>
</dbReference>
<dbReference type="PANTHER" id="PTHR45900:SF1">
    <property type="entry name" value="MITOCHONDRIAL DNA REPAIR PROTEIN RECA HOMOLOG-RELATED"/>
    <property type="match status" value="1"/>
</dbReference>
<dbReference type="PANTHER" id="PTHR45900">
    <property type="entry name" value="RECA"/>
    <property type="match status" value="1"/>
</dbReference>
<dbReference type="Pfam" id="PF00154">
    <property type="entry name" value="RecA"/>
    <property type="match status" value="1"/>
</dbReference>
<dbReference type="Pfam" id="PF21096">
    <property type="entry name" value="RecA_C"/>
    <property type="match status" value="1"/>
</dbReference>
<dbReference type="PRINTS" id="PR00142">
    <property type="entry name" value="RECA"/>
</dbReference>
<dbReference type="SMART" id="SM00382">
    <property type="entry name" value="AAA"/>
    <property type="match status" value="1"/>
</dbReference>
<dbReference type="SUPFAM" id="SSF52540">
    <property type="entry name" value="P-loop containing nucleoside triphosphate hydrolases"/>
    <property type="match status" value="1"/>
</dbReference>
<dbReference type="SUPFAM" id="SSF54752">
    <property type="entry name" value="RecA protein, C-terminal domain"/>
    <property type="match status" value="1"/>
</dbReference>
<dbReference type="PROSITE" id="PS00321">
    <property type="entry name" value="RECA_1"/>
    <property type="match status" value="1"/>
</dbReference>
<dbReference type="PROSITE" id="PS50162">
    <property type="entry name" value="RECA_2"/>
    <property type="match status" value="1"/>
</dbReference>
<dbReference type="PROSITE" id="PS50163">
    <property type="entry name" value="RECA_3"/>
    <property type="match status" value="1"/>
</dbReference>
<organism>
    <name type="scientific">Xanthomonas campestris pv. campestris (strain 8004)</name>
    <dbReference type="NCBI Taxonomy" id="314565"/>
    <lineage>
        <taxon>Bacteria</taxon>
        <taxon>Pseudomonadati</taxon>
        <taxon>Pseudomonadota</taxon>
        <taxon>Gammaproteobacteria</taxon>
        <taxon>Lysobacterales</taxon>
        <taxon>Lysobacteraceae</taxon>
        <taxon>Xanthomonas</taxon>
    </lineage>
</organism>
<evidence type="ECO:0000255" key="1">
    <source>
        <dbReference type="HAMAP-Rule" id="MF_00268"/>
    </source>
</evidence>
<accession>Q4UTR4</accession>